<comment type="similarity">
    <text evidence="1">Belongs to the UPF0301 (AlgH) family.</text>
</comment>
<keyword id="KW-1185">Reference proteome</keyword>
<evidence type="ECO:0000255" key="1">
    <source>
        <dbReference type="HAMAP-Rule" id="MF_00758"/>
    </source>
</evidence>
<accession>B6JJ36</accession>
<accession>F8BZ23</accession>
<sequence length="210" mass="22402">MTQPIGLDGLPEKASSSGTTYLDGQLLIAMPVMQDERFARSVIYVCAHSPDGAMGIIVNRPAGSIDFPQLLRQLDIVADGVPIQLPDDGETVKILRGGPVETSRGFVLHSSDYAIEDATLPIDNGICLTATLDILKAIAQGTGPRRAVLALGYAGWAPGQLESEIQHNGWLHCPADPDIVFGRDMDDKYQRALQKIGIDLGMLSNSAGHA</sequence>
<organism>
    <name type="scientific">Afipia carboxidovorans (strain ATCC 49405 / DSM 1227 / KCTC 32145 / OM5)</name>
    <name type="common">Oligotropha carboxidovorans</name>
    <dbReference type="NCBI Taxonomy" id="504832"/>
    <lineage>
        <taxon>Bacteria</taxon>
        <taxon>Pseudomonadati</taxon>
        <taxon>Pseudomonadota</taxon>
        <taxon>Alphaproteobacteria</taxon>
        <taxon>Hyphomicrobiales</taxon>
        <taxon>Nitrobacteraceae</taxon>
        <taxon>Afipia</taxon>
    </lineage>
</organism>
<feature type="chain" id="PRO_1000198283" description="UPF0301 protein OCAR_7326/OCA5_c07920">
    <location>
        <begin position="1"/>
        <end position="210"/>
    </location>
</feature>
<gene>
    <name type="ordered locus">OCAR_7326</name>
    <name type="ordered locus">OCA5_c07920</name>
</gene>
<name>Y7326_AFIC5</name>
<proteinExistence type="inferred from homology"/>
<protein>
    <recommendedName>
        <fullName evidence="1">UPF0301 protein OCAR_7326/OCA5_c07920</fullName>
    </recommendedName>
</protein>
<reference key="1">
    <citation type="journal article" date="2008" name="J. Bacteriol.">
        <title>Genome sequence of the chemolithoautotrophic bacterium Oligotropha carboxidovorans OM5T.</title>
        <authorList>
            <person name="Paul D."/>
            <person name="Bridges S."/>
            <person name="Burgess S.C."/>
            <person name="Dandass Y."/>
            <person name="Lawrence M.L."/>
        </authorList>
    </citation>
    <scope>NUCLEOTIDE SEQUENCE [LARGE SCALE GENOMIC DNA]</scope>
    <source>
        <strain>ATCC 49405 / DSM 1227 / KCTC 32145 / OM5</strain>
    </source>
</reference>
<reference key="2">
    <citation type="journal article" date="2011" name="J. Bacteriol.">
        <title>Complete genome sequences of the chemolithoautotrophic Oligotropha carboxidovorans strains OM4 and OM5.</title>
        <authorList>
            <person name="Volland S."/>
            <person name="Rachinger M."/>
            <person name="Strittmatter A."/>
            <person name="Daniel R."/>
            <person name="Gottschalk G."/>
            <person name="Meyer O."/>
        </authorList>
    </citation>
    <scope>NUCLEOTIDE SEQUENCE [LARGE SCALE GENOMIC DNA]</scope>
    <source>
        <strain>ATCC 49405 / DSM 1227 / KCTC 32145 / OM5</strain>
    </source>
</reference>
<dbReference type="EMBL" id="CP001196">
    <property type="protein sequence ID" value="ACI94430.1"/>
    <property type="molecule type" value="Genomic_DNA"/>
</dbReference>
<dbReference type="EMBL" id="CP002826">
    <property type="protein sequence ID" value="AEI05514.1"/>
    <property type="molecule type" value="Genomic_DNA"/>
</dbReference>
<dbReference type="RefSeq" id="WP_012564456.1">
    <property type="nucleotide sequence ID" value="NC_015684.1"/>
</dbReference>
<dbReference type="SMR" id="B6JJ36"/>
<dbReference type="STRING" id="504832.OCA5_c07920"/>
<dbReference type="KEGG" id="oca:OCAR_7326"/>
<dbReference type="KEGG" id="ocg:OCA5_c07920"/>
<dbReference type="PATRIC" id="fig|504832.7.peg.837"/>
<dbReference type="eggNOG" id="COG1678">
    <property type="taxonomic scope" value="Bacteria"/>
</dbReference>
<dbReference type="HOGENOM" id="CLU_057596_1_0_5"/>
<dbReference type="OrthoDB" id="9807486at2"/>
<dbReference type="Proteomes" id="UP000007730">
    <property type="component" value="Chromosome"/>
</dbReference>
<dbReference type="GO" id="GO:0005829">
    <property type="term" value="C:cytosol"/>
    <property type="evidence" value="ECO:0007669"/>
    <property type="project" value="TreeGrafter"/>
</dbReference>
<dbReference type="Gene3D" id="3.40.1740.10">
    <property type="entry name" value="VC0467-like"/>
    <property type="match status" value="1"/>
</dbReference>
<dbReference type="HAMAP" id="MF_00758">
    <property type="entry name" value="UPF0301"/>
    <property type="match status" value="1"/>
</dbReference>
<dbReference type="InterPro" id="IPR003774">
    <property type="entry name" value="AlgH-like"/>
</dbReference>
<dbReference type="NCBIfam" id="NF001268">
    <property type="entry name" value="PRK00228.1-4"/>
    <property type="match status" value="1"/>
</dbReference>
<dbReference type="PANTHER" id="PTHR30327">
    <property type="entry name" value="UNCHARACTERIZED PROTEIN YQGE"/>
    <property type="match status" value="1"/>
</dbReference>
<dbReference type="PANTHER" id="PTHR30327:SF1">
    <property type="entry name" value="UPF0301 PROTEIN YQGE"/>
    <property type="match status" value="1"/>
</dbReference>
<dbReference type="Pfam" id="PF02622">
    <property type="entry name" value="DUF179"/>
    <property type="match status" value="1"/>
</dbReference>
<dbReference type="SUPFAM" id="SSF143456">
    <property type="entry name" value="VC0467-like"/>
    <property type="match status" value="1"/>
</dbReference>